<evidence type="ECO:0000250" key="1"/>
<evidence type="ECO:0000250" key="2">
    <source>
        <dbReference type="UniProtKB" id="P10909"/>
    </source>
</evidence>
<evidence type="ECO:0000250" key="3">
    <source>
        <dbReference type="UniProtKB" id="Q06890"/>
    </source>
</evidence>
<evidence type="ECO:0000269" key="4">
    <source>
    </source>
</evidence>
<evidence type="ECO:0000269" key="5">
    <source>
    </source>
</evidence>
<evidence type="ECO:0000269" key="6">
    <source>
    </source>
</evidence>
<evidence type="ECO:0000303" key="7">
    <source>
    </source>
</evidence>
<evidence type="ECO:0000303" key="8">
    <source>
    </source>
</evidence>
<evidence type="ECO:0000303" key="9">
    <source>
    </source>
</evidence>
<evidence type="ECO:0000303" key="10">
    <source>
    </source>
</evidence>
<evidence type="ECO:0000305" key="11"/>
<evidence type="ECO:0000305" key="12">
    <source>
    </source>
</evidence>
<evidence type="ECO:0000312" key="13">
    <source>
        <dbReference type="RGD" id="3907"/>
    </source>
</evidence>
<organism>
    <name type="scientific">Rattus norvegicus</name>
    <name type="common">Rat</name>
    <dbReference type="NCBI Taxonomy" id="10116"/>
    <lineage>
        <taxon>Eukaryota</taxon>
        <taxon>Metazoa</taxon>
        <taxon>Chordata</taxon>
        <taxon>Craniata</taxon>
        <taxon>Vertebrata</taxon>
        <taxon>Euteleostomi</taxon>
        <taxon>Mammalia</taxon>
        <taxon>Eutheria</taxon>
        <taxon>Euarchontoglires</taxon>
        <taxon>Glires</taxon>
        <taxon>Rodentia</taxon>
        <taxon>Myomorpha</taxon>
        <taxon>Muroidea</taxon>
        <taxon>Muridae</taxon>
        <taxon>Murinae</taxon>
        <taxon>Rattus</taxon>
    </lineage>
</organism>
<comment type="function">
    <text evidence="2 3 4">Functions as extracellular chaperone that prevents aggregation of non native proteins. Prevents stress-induced aggregation of blood plasma proteins. Inhibits formation of amyloid fibrils by APP, APOC2, B2M, CALCA, CSN3, SNCA and aggregation-prone LYZ variants (in vitro). Does not require ATP. Maintains partially unfolded proteins in a state appropriate for subsequent refolding by other chaperones, such as HSPA8/HSC70. Does not refold proteins by itself. Binding to cell surface receptors triggers internalization of the chaperone-client complex and subsequent lysosomal or proteasomal degradation. When secreted, protects cells against apoptosis and against cytolysis by complement: inhibits assembly of the complement membrane attack complex (MAC) by preventing polymerization of C9 pore component of the MAC complex. Intracellular forms interact with ubiquitin and SCF (SKP1-CUL1-F-box protein) E3 ubiquitin-protein ligase complexes and promote the ubiquitination and subsequent proteasomal degradation of target proteins. Promotes proteasomal degradation of COMMD1 and IKBKB. Modulates NF-kappa-B transcriptional activity (By similarity). Following stress, promotes apoptosis (By similarity). Inhibits apoptosis when associated with the mitochondrial membrane by interference with BAX-dependent release of cytochrome c into the cytoplasm. Plays a role in the regulation of cell proliferation. An intracellular form suppresses stress-induced apoptosis by stabilizing mitochondrial membrane integrity through interaction with HSPA5. Secreted form does not affect caspase or BAX-mediated intrinsic apoptosis and TNF-induced NF-kappa-B-activity (By similarity). Secreted form act as an important modulator during neuronal differentiation through interaction with STMN3 (PubMed:16038898). Plays a role in the clearance of immune complexes that arise during cell injury (By similarity).</text>
</comment>
<comment type="subunit">
    <text evidence="2 4 5">Antiparallel disulfide-linked heterodimer of an alpha chain and a beta chain (PubMed:3415696). Self-associates and forms higher oligomers. Interacts with a broad range of misfolded proteins, including APP, APOC2 and LYZ. Slightly acidic pH promotes interaction with misfolded proteins. Forms high-molecular weight oligomers upon interaction with misfolded proteins. Interacts with APOA1, LRP2, CLUAP1 and PON1. Interacts with the complement membrane attack complex. Interacts (via alpha chain) with XRCC6. Interacts with SYVN1, COMMD1, BTRC, CUL1 and with ubiquitin and SCF (SKP1-CUL1-F-box protein) E3 ubiquitin-protein ligase complexes. Interacts (via alpha chain) with BAX in stressed cells, where BAX undergoes a conformation change leading to association with the mitochondrial membrane. Does not interact with BAX in unstressed cells. Found in a complex with LTF, CLU, EPPIN and SEMG1. Interacts (immaturely glycosylated pre-secreted form) with HSPA5; this interaction promotes CLU stability and facilitates stress-induced CLU retrotranslocation from the secretory pathway to the mitochondria, thereby reducing stress-induced apoptosis by stabilizing mitochondrial membrane integrity. Interacts with BCL2L1; this interaction releases and activates BAX and promotes cell death. Interacts with TGFBR2 and ACVR1 (By similarity). Interacts (secreted form) with STMN3; this interaction may act as an important modulator during neuronal differentiation (PubMed:16038898). Interacts with VLDLR and LRP8 (By similarity).</text>
</comment>
<comment type="subcellular location">
    <subcellularLocation>
        <location evidence="5 6">Secreted</location>
    </subcellularLocation>
    <subcellularLocation>
        <location evidence="2">Nucleus</location>
    </subcellularLocation>
    <subcellularLocation>
        <location evidence="2">Cytoplasm</location>
    </subcellularLocation>
    <subcellularLocation>
        <location evidence="2">Mitochondrion membrane</location>
        <topology evidence="2">Peripheral membrane protein</topology>
        <orientation evidence="2">Cytoplasmic side</orientation>
    </subcellularLocation>
    <subcellularLocation>
        <location evidence="4">Cytoplasm</location>
        <location evidence="4">Cytosol</location>
    </subcellularLocation>
    <subcellularLocation>
        <location evidence="2">Microsome</location>
    </subcellularLocation>
    <subcellularLocation>
        <location evidence="2">Endoplasmic reticulum</location>
    </subcellularLocation>
    <subcellularLocation>
        <location evidence="2">Mitochondrion</location>
    </subcellularLocation>
    <subcellularLocation>
        <location evidence="2">Mitochondrion membrane</location>
    </subcellularLocation>
    <subcellularLocation>
        <location evidence="4">Cytoplasm</location>
        <location evidence="4">Perinuclear region</location>
    </subcellularLocation>
    <subcellularLocation>
        <location>Cytoplasmic vesicle</location>
        <location>Secretory vesicle</location>
        <location>Chromaffin granule</location>
    </subcellularLocation>
    <text evidence="2">Can retrotranslocate from the secretory compartments to the cytosol upon cellular stress. Detected in perinuclear foci that may be aggresomes containing misfolded, ubiquitinated proteins. Detected at the mitochondrion membrane upon induction of apoptosis. Under ER stress, a immaturely glycosylated pre-secreted form retrotranslocates from the endoplasmic reticulum (ER)-Golgi network to the cytoplasm to localize in the mitochondria through HSPA5 interaction. ER stress reduces secretion. Under the stress, minor amounts of non-secreted forms accumulate in cytoplasm.</text>
</comment>
<comment type="tissue specificity">
    <text evidence="6">Detected in Sertoli cells (at protein level). Detected in cultured Sertoli cells, testis, epididymis, liver and brain.</text>
</comment>
<comment type="developmental stage">
    <text>Expressed by cells undergoing programmed death as a result of the hormonal stimuli or a traumatic insult.</text>
</comment>
<comment type="PTM">
    <text evidence="2 5 6">Proteolytically cleaved on its way through the secretory system, probably within the Golgi lumen (PubMed:3415696, PubMed:3651384). Proteolytic cleavage is not necessary for its chaperone activity. All non-secreted forms are not proteolytically cleaved. Chaperone activity of uncleaved forms is dependent on a non-reducing environment (By similarity).</text>
</comment>
<comment type="PTM">
    <text evidence="2">Polyubiquitinated, leading to proteasomal degradation. Under cellular stress, the intracellular level of cleaved form is reduced due to proteasomal degradation.</text>
</comment>
<comment type="PTM">
    <text evidence="2 6">Extensively glycosylated with sulfated N-linked carbohydrates (PubMed:3651384). About 30% of the protein mass is comprised of complex N-linked carbohydrate. Endoplasmic reticulum (ER) stress induces changes in glycosylation status and increases level of hypoglycosylated forms. Core carbohydrates are essential for chaperone activity. Non-secreted forms are hypoglycosylated or unglycosylated (By similarity).</text>
</comment>
<comment type="similarity">
    <text evidence="11">Belongs to the clusterin family.</text>
</comment>
<sequence length="447" mass="51375">MKILLLCVALLLTWDNGMVLGEQEFSDNELQELSTQGSRYVNKEIQNAVQGVKHIKTLIEKTNAERKSLLNSLEEAKKKKEGALDDTRDSEMKLKAFPEVCNETMMALWEECKPCLKHTCMKFYARVCRSGSGLVGRQLEEFLNQSSPFYFWMNGDRIDSLLESDRQQSQVLDAMQDSFTRASGIIDTLFQDRFFTHEPQDIHHFSPMGFPHKRPHFLYPKSRLVRSLMPLSHYGPLSFHNMFQPFFDMIHQAQQAMDVQLHSPALQFPDVDFLKEGEDDPTVCKEIRHNSTGCLKMKGQCEKCQEILSVDCSTNNPAQANLRQELNDSLQVAERLTQQYNELLHSLQSKMLNTSSLLEQLNDQFTWVSQLANLTQGDDQYLRVSTVTTHSSDSEVPSRVTEVVVKLFDSDPITVVLPEEVSKDNPKFMDTVAEKALQEYRRKSRME</sequence>
<gene>
    <name evidence="13" type="primary">Clu</name>
</gene>
<reference key="1">
    <citation type="journal article" date="1987" name="Biochemistry">
        <title>Biosynthesis and molecular cloning of sulfated glycoprotein 2 secreted by rat Sertoli cells.</title>
        <authorList>
            <person name="Collard M.W."/>
            <person name="Griswold M.D."/>
        </authorList>
    </citation>
    <scope>NUCLEOTIDE SEQUENCE [MRNA]</scope>
    <scope>PROTEIN SEQUENCE OF 22-45 AND 227-241</scope>
    <scope>PROTEOLYTIC PROCESSING</scope>
    <scope>GLYCOSYLATION</scope>
    <scope>SUBCELLULAR LOCATION</scope>
    <scope>TISSUE SPECIFICITY</scope>
</reference>
<reference key="2">
    <citation type="journal article" date="1989" name="Biochem. J.">
        <title>Identification of an androgen-repressed mRNA in rat ventral prostate as coding for sulphated glycoprotein 2 by cDNA cloning and sequence analysis.</title>
        <authorList>
            <person name="Bettuzzi S."/>
            <person name="Hiipakka R.A."/>
            <person name="Gilna P."/>
            <person name="Liao S."/>
        </authorList>
    </citation>
    <scope>NUCLEOTIDE SEQUENCE [MRNA]</scope>
    <source>
        <strain>Sprague-Dawley</strain>
        <tissue>Prostate</tissue>
    </source>
</reference>
<reference key="3">
    <citation type="journal article" date="1993" name="J. Biol. Chem.">
        <title>Genomic organization and expression of the rat TRPM-2 (clusterin) gene, a gene implicated in apoptosis.</title>
        <authorList>
            <person name="Wong P."/>
            <person name="Pineault J.M."/>
            <person name="Lakins J."/>
            <person name="Taillefer D."/>
            <person name="Leger J."/>
            <person name="Wang C."/>
            <person name="Tenniswood M."/>
        </authorList>
    </citation>
    <scope>NUCLEOTIDE SEQUENCE [GENOMIC DNA / MRNA]</scope>
    <source>
        <strain>Sprague-Dawley</strain>
    </source>
</reference>
<reference key="4">
    <citation type="journal article" date="1988" name="Biochem. Biophys. Res. Commun.">
        <title>Rat clusterin isolated from primary Sertoli cell-enriched culture medium is sulfated glycoprotein-2 (SGP-2).</title>
        <authorList>
            <person name="Cheng C.Y."/>
            <person name="Chen C.C."/>
            <person name="Feng Z."/>
            <person name="Marshall A."/>
            <person name="Bardin C.W."/>
        </authorList>
    </citation>
    <scope>PROTEIN SEQUENCE OF 22-51 AND 227-256</scope>
    <scope>SUBCELLULAR LOCATION</scope>
    <scope>SUBUNIT</scope>
    <scope>PROTEOLYTIC PROCESSING</scope>
</reference>
<reference key="5">
    <citation type="journal article" date="1990" name="J. Urol.">
        <title>Characterization of the products of a gene expressed during androgen-programmed cell death and their potential use as a marker of urogenital injury.</title>
        <authorList>
            <person name="Bandyk M.G."/>
            <person name="Sawczuk I.S."/>
            <person name="Olsson C.A."/>
            <person name="Katz A.E."/>
            <person name="Buttyan R."/>
        </authorList>
    </citation>
    <scope>CHARACTERIZATION OF TRPM-2</scope>
</reference>
<reference key="6">
    <citation type="journal article" date="2005" name="Exp. Cell Res.">
        <title>Clusterin interacts with SCLIP (SCG10-like protein) and promotes neurite outgrowth of PC12 cells.</title>
        <authorList>
            <person name="Kang S.W."/>
            <person name="Shin Y.J."/>
            <person name="Shim Y.J."/>
            <person name="Jeong S.Y."/>
            <person name="Park I.S."/>
            <person name="Min B.H."/>
        </authorList>
    </citation>
    <scope>INTERACTION WITH STMN3</scope>
    <scope>SUBCELLULAR LOCATION</scope>
    <scope>FUNCTION</scope>
</reference>
<reference key="7">
    <citation type="journal article" date="2012" name="Nat. Commun.">
        <title>Quantitative maps of protein phosphorylation sites across 14 different rat organs and tissues.</title>
        <authorList>
            <person name="Lundby A."/>
            <person name="Secher A."/>
            <person name="Lage K."/>
            <person name="Nordsborg N.B."/>
            <person name="Dmytriyev A."/>
            <person name="Lundby C."/>
            <person name="Olsen J.V."/>
        </authorList>
    </citation>
    <scope>IDENTIFICATION BY MASS SPECTROMETRY [LARGE SCALE ANALYSIS]</scope>
</reference>
<accession>P05371</accession>
<proteinExistence type="evidence at protein level"/>
<keyword id="KW-0143">Chaperone</keyword>
<keyword id="KW-0963">Cytoplasm</keyword>
<keyword id="KW-0968">Cytoplasmic vesicle</keyword>
<keyword id="KW-0217">Developmental protein</keyword>
<keyword id="KW-0221">Differentiation</keyword>
<keyword id="KW-0903">Direct protein sequencing</keyword>
<keyword id="KW-1015">Disulfide bond</keyword>
<keyword id="KW-0256">Endoplasmic reticulum</keyword>
<keyword id="KW-0325">Glycoprotein</keyword>
<keyword id="KW-0472">Membrane</keyword>
<keyword id="KW-0492">Microsome</keyword>
<keyword id="KW-0496">Mitochondrion</keyword>
<keyword id="KW-0539">Nucleus</keyword>
<keyword id="KW-0597">Phosphoprotein</keyword>
<keyword id="KW-1185">Reference proteome</keyword>
<keyword id="KW-0964">Secreted</keyword>
<keyword id="KW-0732">Signal</keyword>
<keyword id="KW-0744">Spermatogenesis</keyword>
<keyword id="KW-0832">Ubl conjugation</keyword>
<feature type="signal peptide" evidence="5 6">
    <location>
        <begin position="1"/>
        <end position="21"/>
    </location>
</feature>
<feature type="chain" id="PRO_0000005544" description="Clusterin">
    <location>
        <begin position="22"/>
        <end position="447"/>
    </location>
</feature>
<feature type="chain" id="PRO_0000005545" description="Clusterin beta chain">
    <location>
        <begin position="22"/>
        <end position="226"/>
    </location>
</feature>
<feature type="chain" id="PRO_0000005546" description="Clusterin alpha chain">
    <location>
        <begin position="227"/>
        <end position="447"/>
    </location>
</feature>
<feature type="short sequence motif" description="Nuclear localization signal" evidence="3">
    <location>
        <begin position="77"/>
        <end position="80"/>
    </location>
</feature>
<feature type="short sequence motif" description="Nuclear localization signal" evidence="3">
    <location>
        <begin position="441"/>
        <end position="445"/>
    </location>
</feature>
<feature type="modified residue" description="Phosphoserine" evidence="2">
    <location>
        <position position="132"/>
    </location>
</feature>
<feature type="modified residue" description="Phosphoserine" evidence="2">
    <location>
        <position position="394"/>
    </location>
</feature>
<feature type="glycosylation site" description="N-linked (GlcNAc...) asparagine" evidence="12">
    <location>
        <position position="102"/>
    </location>
</feature>
<feature type="glycosylation site" description="N-linked (GlcNAc...) asparagine" evidence="12">
    <location>
        <position position="144"/>
    </location>
</feature>
<feature type="glycosylation site" description="N-linked (GlcNAc...) asparagine" evidence="12">
    <location>
        <position position="290"/>
    </location>
</feature>
<feature type="glycosylation site" description="N-linked (GlcNAc...) asparagine" evidence="12">
    <location>
        <position position="327"/>
    </location>
</feature>
<feature type="glycosylation site" description="N-linked (GlcNAc...) asparagine" evidence="12">
    <location>
        <position position="353"/>
    </location>
</feature>
<feature type="glycosylation site" description="N-linked (GlcNAc...) asparagine" evidence="12">
    <location>
        <position position="373"/>
    </location>
</feature>
<feature type="disulfide bond" description="Interchain (between beta and alpha chains)" evidence="1">
    <location>
        <begin position="101"/>
        <end position="312"/>
    </location>
</feature>
<feature type="disulfide bond" description="Interchain (between beta and alpha chains)" evidence="1">
    <location>
        <begin position="112"/>
        <end position="304"/>
    </location>
</feature>
<feature type="disulfide bond" description="Interchain (between beta and alpha chains)" evidence="1">
    <location>
        <begin position="115"/>
        <end position="301"/>
    </location>
</feature>
<feature type="disulfide bond" description="Interchain (between beta and alpha chains)" evidence="1">
    <location>
        <begin position="120"/>
        <end position="294"/>
    </location>
</feature>
<feature type="disulfide bond" description="Interchain (between beta and alpha chains)" evidence="1">
    <location>
        <begin position="128"/>
        <end position="284"/>
    </location>
</feature>
<feature type="sequence conflict" description="In Ref. 1; AAA41273." evidence="11" ref="1">
    <original>D</original>
    <variation>H</variation>
    <location>
        <position position="187"/>
    </location>
</feature>
<dbReference type="EMBL" id="M16975">
    <property type="protein sequence ID" value="AAA41273.1"/>
    <property type="molecule type" value="mRNA"/>
</dbReference>
<dbReference type="EMBL" id="X13231">
    <property type="protein sequence ID" value="CAA31618.1"/>
    <property type="molecule type" value="mRNA"/>
</dbReference>
<dbReference type="EMBL" id="M64723">
    <property type="protein sequence ID" value="AAA42298.1"/>
    <property type="molecule type" value="mRNA"/>
</dbReference>
<dbReference type="EMBL" id="M64733">
    <property type="protein sequence ID" value="AAA42299.1"/>
    <property type="molecule type" value="Genomic_DNA"/>
</dbReference>
<dbReference type="PIR" id="A45890">
    <property type="entry name" value="A27205"/>
</dbReference>
<dbReference type="RefSeq" id="NP_444180.2">
    <property type="nucleotide sequence ID" value="NM_053021.2"/>
</dbReference>
<dbReference type="SMR" id="P05371"/>
<dbReference type="BioGRID" id="246971">
    <property type="interactions" value="2"/>
</dbReference>
<dbReference type="FunCoup" id="P05371">
    <property type="interactions" value="525"/>
</dbReference>
<dbReference type="IntAct" id="P05371">
    <property type="interactions" value="1"/>
</dbReference>
<dbReference type="MINT" id="P05371"/>
<dbReference type="STRING" id="10116.ENSRNOP00000072116"/>
<dbReference type="CarbonylDB" id="P05371"/>
<dbReference type="GlyCosmos" id="P05371">
    <property type="glycosylation" value="6 sites, No reported glycans"/>
</dbReference>
<dbReference type="GlyGen" id="P05371">
    <property type="glycosylation" value="7 sites, 2 N-linked;o-linked glycans (1 site)"/>
</dbReference>
<dbReference type="iPTMnet" id="P05371"/>
<dbReference type="PhosphoSitePlus" id="P05371"/>
<dbReference type="jPOST" id="P05371"/>
<dbReference type="PaxDb" id="10116-ENSRNOP00000022095"/>
<dbReference type="DNASU" id="24854"/>
<dbReference type="GeneID" id="24854"/>
<dbReference type="KEGG" id="rno:24854"/>
<dbReference type="UCSC" id="RGD:3907">
    <property type="organism name" value="rat"/>
</dbReference>
<dbReference type="AGR" id="RGD:3907"/>
<dbReference type="CTD" id="1191"/>
<dbReference type="RGD" id="3907">
    <property type="gene designation" value="Clu"/>
</dbReference>
<dbReference type="eggNOG" id="ENOG502RBQP">
    <property type="taxonomic scope" value="Eukaryota"/>
</dbReference>
<dbReference type="InParanoid" id="P05371"/>
<dbReference type="PhylomeDB" id="P05371"/>
<dbReference type="Reactome" id="R-RNO-114608">
    <property type="pathway name" value="Platelet degranulation"/>
</dbReference>
<dbReference type="Reactome" id="R-RNO-6803157">
    <property type="pathway name" value="Antimicrobial peptides"/>
</dbReference>
<dbReference type="Reactome" id="R-RNO-977606">
    <property type="pathway name" value="Regulation of Complement cascade"/>
</dbReference>
<dbReference type="PRO" id="PR:P05371"/>
<dbReference type="Proteomes" id="UP000002494">
    <property type="component" value="Unplaced"/>
</dbReference>
<dbReference type="GO" id="GO:0016235">
    <property type="term" value="C:aggresome"/>
    <property type="evidence" value="ECO:0000314"/>
    <property type="project" value="RGD"/>
</dbReference>
<dbReference type="GO" id="GO:0097440">
    <property type="term" value="C:apical dendrite"/>
    <property type="evidence" value="ECO:0000250"/>
    <property type="project" value="Alzheimers_University_of_Toronto"/>
</dbReference>
<dbReference type="GO" id="GO:0071944">
    <property type="term" value="C:cell periphery"/>
    <property type="evidence" value="ECO:0000266"/>
    <property type="project" value="RGD"/>
</dbReference>
<dbReference type="GO" id="GO:0009986">
    <property type="term" value="C:cell surface"/>
    <property type="evidence" value="ECO:0000266"/>
    <property type="project" value="RGD"/>
</dbReference>
<dbReference type="GO" id="GO:0042583">
    <property type="term" value="C:chromaffin granule"/>
    <property type="evidence" value="ECO:0007669"/>
    <property type="project" value="UniProtKB-SubCell"/>
</dbReference>
<dbReference type="GO" id="GO:0005737">
    <property type="term" value="C:cytoplasm"/>
    <property type="evidence" value="ECO:0000250"/>
    <property type="project" value="Alzheimers_University_of_Toronto"/>
</dbReference>
<dbReference type="GO" id="GO:0005856">
    <property type="term" value="C:cytoskeleton"/>
    <property type="evidence" value="ECO:0000266"/>
    <property type="project" value="RGD"/>
</dbReference>
<dbReference type="GO" id="GO:0005829">
    <property type="term" value="C:cytosol"/>
    <property type="evidence" value="ECO:0000314"/>
    <property type="project" value="UniProtKB"/>
</dbReference>
<dbReference type="GO" id="GO:0030425">
    <property type="term" value="C:dendrite"/>
    <property type="evidence" value="ECO:0000314"/>
    <property type="project" value="RGD"/>
</dbReference>
<dbReference type="GO" id="GO:0005615">
    <property type="term" value="C:extracellular space"/>
    <property type="evidence" value="ECO:0000314"/>
    <property type="project" value="CAFA"/>
</dbReference>
<dbReference type="GO" id="GO:0005794">
    <property type="term" value="C:Golgi apparatus"/>
    <property type="evidence" value="ECO:0000266"/>
    <property type="project" value="RGD"/>
</dbReference>
<dbReference type="GO" id="GO:0030426">
    <property type="term" value="C:growth cone"/>
    <property type="evidence" value="ECO:0000314"/>
    <property type="project" value="RGD"/>
</dbReference>
<dbReference type="GO" id="GO:0043231">
    <property type="term" value="C:intracellular membrane-bounded organelle"/>
    <property type="evidence" value="ECO:0000266"/>
    <property type="project" value="RGD"/>
</dbReference>
<dbReference type="GO" id="GO:0016020">
    <property type="term" value="C:membrane"/>
    <property type="evidence" value="ECO:0000266"/>
    <property type="project" value="RGD"/>
</dbReference>
<dbReference type="GO" id="GO:0005743">
    <property type="term" value="C:mitochondrial inner membrane"/>
    <property type="evidence" value="ECO:0000250"/>
    <property type="project" value="UniProtKB"/>
</dbReference>
<dbReference type="GO" id="GO:0005739">
    <property type="term" value="C:mitochondrion"/>
    <property type="evidence" value="ECO:0000250"/>
    <property type="project" value="UniProtKB"/>
</dbReference>
<dbReference type="GO" id="GO:0097418">
    <property type="term" value="C:neurofibrillary tangle"/>
    <property type="evidence" value="ECO:0000250"/>
    <property type="project" value="Alzheimers_University_of_Toronto"/>
</dbReference>
<dbReference type="GO" id="GO:0005634">
    <property type="term" value="C:nucleus"/>
    <property type="evidence" value="ECO:0000266"/>
    <property type="project" value="RGD"/>
</dbReference>
<dbReference type="GO" id="GO:0043204">
    <property type="term" value="C:perikaryon"/>
    <property type="evidence" value="ECO:0000314"/>
    <property type="project" value="RGD"/>
</dbReference>
<dbReference type="GO" id="GO:0099020">
    <property type="term" value="C:perinuclear endoplasmic reticulum lumen"/>
    <property type="evidence" value="ECO:0000250"/>
    <property type="project" value="UniProtKB"/>
</dbReference>
<dbReference type="GO" id="GO:0048471">
    <property type="term" value="C:perinuclear region of cytoplasm"/>
    <property type="evidence" value="ECO:0000314"/>
    <property type="project" value="RGD"/>
</dbReference>
<dbReference type="GO" id="GO:0032991">
    <property type="term" value="C:protein-containing complex"/>
    <property type="evidence" value="ECO:0000266"/>
    <property type="project" value="RGD"/>
</dbReference>
<dbReference type="GO" id="GO:0034366">
    <property type="term" value="C:spherical high-density lipoprotein particle"/>
    <property type="evidence" value="ECO:0000250"/>
    <property type="project" value="UniProtKB"/>
</dbReference>
<dbReference type="GO" id="GO:0045202">
    <property type="term" value="C:synapse"/>
    <property type="evidence" value="ECO:0000266"/>
    <property type="project" value="RGD"/>
</dbReference>
<dbReference type="GO" id="GO:0001540">
    <property type="term" value="F:amyloid-beta binding"/>
    <property type="evidence" value="ECO:0000266"/>
    <property type="project" value="RGD"/>
</dbReference>
<dbReference type="GO" id="GO:0050750">
    <property type="term" value="F:low-density lipoprotein particle receptor binding"/>
    <property type="evidence" value="ECO:0000266"/>
    <property type="project" value="RGD"/>
</dbReference>
<dbReference type="GO" id="GO:0051787">
    <property type="term" value="F:misfolded protein binding"/>
    <property type="evidence" value="ECO:0000250"/>
    <property type="project" value="UniProtKB"/>
</dbReference>
<dbReference type="GO" id="GO:0140597">
    <property type="term" value="F:protein carrier chaperone"/>
    <property type="evidence" value="ECO:0000266"/>
    <property type="project" value="RGD"/>
</dbReference>
<dbReference type="GO" id="GO:0044877">
    <property type="term" value="F:protein-containing complex binding"/>
    <property type="evidence" value="ECO:0000266"/>
    <property type="project" value="RGD"/>
</dbReference>
<dbReference type="GO" id="GO:0048018">
    <property type="term" value="F:receptor ligand activity"/>
    <property type="evidence" value="ECO:0000266"/>
    <property type="project" value="RGD"/>
</dbReference>
<dbReference type="GO" id="GO:0005102">
    <property type="term" value="F:signaling receptor binding"/>
    <property type="evidence" value="ECO:0000266"/>
    <property type="project" value="RGD"/>
</dbReference>
<dbReference type="GO" id="GO:0048156">
    <property type="term" value="F:tau protein binding"/>
    <property type="evidence" value="ECO:0000266"/>
    <property type="project" value="RGD"/>
</dbReference>
<dbReference type="GO" id="GO:0031625">
    <property type="term" value="F:ubiquitin protein ligase binding"/>
    <property type="evidence" value="ECO:0000250"/>
    <property type="project" value="UniProtKB"/>
</dbReference>
<dbReference type="GO" id="GO:0051082">
    <property type="term" value="F:unfolded protein binding"/>
    <property type="evidence" value="ECO:0000250"/>
    <property type="project" value="UniProtKB"/>
</dbReference>
<dbReference type="GO" id="GO:0097242">
    <property type="term" value="P:amyloid-beta clearance"/>
    <property type="evidence" value="ECO:0000266"/>
    <property type="project" value="RGD"/>
</dbReference>
<dbReference type="GO" id="GO:0000902">
    <property type="term" value="P:cell morphogenesis"/>
    <property type="evidence" value="ECO:0000250"/>
    <property type="project" value="Alzheimers_University_of_Toronto"/>
</dbReference>
<dbReference type="GO" id="GO:0071363">
    <property type="term" value="P:cellular response to growth factor stimulus"/>
    <property type="evidence" value="ECO:0000270"/>
    <property type="project" value="RGD"/>
</dbReference>
<dbReference type="GO" id="GO:0032286">
    <property type="term" value="P:central nervous system myelin maintenance"/>
    <property type="evidence" value="ECO:0000250"/>
    <property type="project" value="Alzheimers_University_of_Toronto"/>
</dbReference>
<dbReference type="GO" id="GO:0051131">
    <property type="term" value="P:chaperone-mediated protein complex assembly"/>
    <property type="evidence" value="ECO:0000250"/>
    <property type="project" value="Alzheimers_University_of_Toronto"/>
</dbReference>
<dbReference type="GO" id="GO:0061077">
    <property type="term" value="P:chaperone-mediated protein folding"/>
    <property type="evidence" value="ECO:0000250"/>
    <property type="project" value="UniProtKB"/>
</dbReference>
<dbReference type="GO" id="GO:0031018">
    <property type="term" value="P:endocrine pancreas development"/>
    <property type="evidence" value="ECO:0000315"/>
    <property type="project" value="RGD"/>
</dbReference>
<dbReference type="GO" id="GO:0044849">
    <property type="term" value="P:estrous cycle"/>
    <property type="evidence" value="ECO:0000270"/>
    <property type="project" value="RGD"/>
</dbReference>
<dbReference type="GO" id="GO:0002434">
    <property type="term" value="P:immune complex clearance"/>
    <property type="evidence" value="ECO:0000250"/>
    <property type="project" value="UniProtKB"/>
</dbReference>
<dbReference type="GO" id="GO:0097193">
    <property type="term" value="P:intrinsic apoptotic signaling pathway"/>
    <property type="evidence" value="ECO:0000250"/>
    <property type="project" value="UniProtKB"/>
</dbReference>
<dbReference type="GO" id="GO:0001774">
    <property type="term" value="P:microglial cell activation"/>
    <property type="evidence" value="ECO:0000250"/>
    <property type="project" value="Alzheimers_University_of_Toronto"/>
</dbReference>
<dbReference type="GO" id="GO:0061518">
    <property type="term" value="P:microglial cell proliferation"/>
    <property type="evidence" value="ECO:0000250"/>
    <property type="project" value="Alzheimers_University_of_Toronto"/>
</dbReference>
<dbReference type="GO" id="GO:1905907">
    <property type="term" value="P:negative regulation of amyloid fibril formation"/>
    <property type="evidence" value="ECO:0000250"/>
    <property type="project" value="UniProtKB"/>
</dbReference>
<dbReference type="GO" id="GO:1902430">
    <property type="term" value="P:negative regulation of amyloid-beta formation"/>
    <property type="evidence" value="ECO:0000250"/>
    <property type="project" value="Alzheimers_University_of_Toronto"/>
</dbReference>
<dbReference type="GO" id="GO:0043066">
    <property type="term" value="P:negative regulation of apoptotic process"/>
    <property type="evidence" value="ECO:0000315"/>
    <property type="project" value="RGD"/>
</dbReference>
<dbReference type="GO" id="GO:1902230">
    <property type="term" value="P:negative regulation of intrinsic apoptotic signaling pathway in response to DNA damage"/>
    <property type="evidence" value="ECO:0000250"/>
    <property type="project" value="UniProtKB"/>
</dbReference>
<dbReference type="GO" id="GO:0043524">
    <property type="term" value="P:negative regulation of neuron apoptotic process"/>
    <property type="evidence" value="ECO:0000316"/>
    <property type="project" value="ARUK-UCL"/>
</dbReference>
<dbReference type="GO" id="GO:0031333">
    <property type="term" value="P:negative regulation of protein-containing complex assembly"/>
    <property type="evidence" value="ECO:0000250"/>
    <property type="project" value="UniProtKB"/>
</dbReference>
<dbReference type="GO" id="GO:1903573">
    <property type="term" value="P:negative regulation of response to endoplasmic reticulum stress"/>
    <property type="evidence" value="ECO:0000266"/>
    <property type="project" value="RGD"/>
</dbReference>
<dbReference type="GO" id="GO:0048812">
    <property type="term" value="P:neuron projection morphogenesis"/>
    <property type="evidence" value="ECO:0000315"/>
    <property type="project" value="RGD"/>
</dbReference>
<dbReference type="GO" id="GO:1902004">
    <property type="term" value="P:positive regulation of amyloid-beta formation"/>
    <property type="evidence" value="ECO:0000250"/>
    <property type="project" value="Alzheimers_University_of_Toronto"/>
</dbReference>
<dbReference type="GO" id="GO:0043065">
    <property type="term" value="P:positive regulation of apoptotic process"/>
    <property type="evidence" value="ECO:0000250"/>
    <property type="project" value="UniProtKB"/>
</dbReference>
<dbReference type="GO" id="GO:0045597">
    <property type="term" value="P:positive regulation of cell differentiation"/>
    <property type="evidence" value="ECO:0000315"/>
    <property type="project" value="RGD"/>
</dbReference>
<dbReference type="GO" id="GO:0008284">
    <property type="term" value="P:positive regulation of cell population proliferation"/>
    <property type="evidence" value="ECO:0000315"/>
    <property type="project" value="RGD"/>
</dbReference>
<dbReference type="GO" id="GO:0010628">
    <property type="term" value="P:positive regulation of gene expression"/>
    <property type="evidence" value="ECO:0000316"/>
    <property type="project" value="ARUK-UCL"/>
</dbReference>
<dbReference type="GO" id="GO:2001244">
    <property type="term" value="P:positive regulation of intrinsic apoptotic signaling pathway"/>
    <property type="evidence" value="ECO:0000250"/>
    <property type="project" value="UniProtKB"/>
</dbReference>
<dbReference type="GO" id="GO:1902998">
    <property type="term" value="P:positive regulation of neurofibrillary tangle assembly"/>
    <property type="evidence" value="ECO:0000250"/>
    <property type="project" value="Alzheimers_University_of_Toronto"/>
</dbReference>
<dbReference type="GO" id="GO:0051092">
    <property type="term" value="P:positive regulation of NF-kappaB transcription factor activity"/>
    <property type="evidence" value="ECO:0000250"/>
    <property type="project" value="UniProtKB"/>
</dbReference>
<dbReference type="GO" id="GO:0045429">
    <property type="term" value="P:positive regulation of nitric oxide biosynthetic process"/>
    <property type="evidence" value="ECO:0000250"/>
    <property type="project" value="Alzheimers_University_of_Toronto"/>
</dbReference>
<dbReference type="GO" id="GO:0032436">
    <property type="term" value="P:positive regulation of proteasomal ubiquitin-dependent protein catabolic process"/>
    <property type="evidence" value="ECO:0000250"/>
    <property type="project" value="UniProtKB"/>
</dbReference>
<dbReference type="GO" id="GO:0031334">
    <property type="term" value="P:positive regulation of protein-containing complex assembly"/>
    <property type="evidence" value="ECO:0000266"/>
    <property type="project" value="RGD"/>
</dbReference>
<dbReference type="GO" id="GO:0048260">
    <property type="term" value="P:positive regulation of receptor-mediated endocytosis"/>
    <property type="evidence" value="ECO:0000250"/>
    <property type="project" value="UniProtKB"/>
</dbReference>
<dbReference type="GO" id="GO:0032760">
    <property type="term" value="P:positive regulation of tumor necrosis factor production"/>
    <property type="evidence" value="ECO:0000250"/>
    <property type="project" value="Alzheimers_University_of_Toronto"/>
</dbReference>
<dbReference type="GO" id="GO:2000060">
    <property type="term" value="P:positive regulation of ubiquitin-dependent protein catabolic process"/>
    <property type="evidence" value="ECO:0000250"/>
    <property type="project" value="UniProtKB"/>
</dbReference>
<dbReference type="GO" id="GO:0017038">
    <property type="term" value="P:protein import"/>
    <property type="evidence" value="ECO:0000250"/>
    <property type="project" value="Alzheimers_University_of_Toronto"/>
</dbReference>
<dbReference type="GO" id="GO:0050821">
    <property type="term" value="P:protein stabilization"/>
    <property type="evidence" value="ECO:0000314"/>
    <property type="project" value="CAFA"/>
</dbReference>
<dbReference type="GO" id="GO:0061740">
    <property type="term" value="P:protein targeting to lysosome involved in chaperone-mediated autophagy"/>
    <property type="evidence" value="ECO:0000266"/>
    <property type="project" value="RGD"/>
</dbReference>
<dbReference type="GO" id="GO:1900221">
    <property type="term" value="P:regulation of amyloid-beta clearance"/>
    <property type="evidence" value="ECO:0000250"/>
    <property type="project" value="Alzheimers_University_of_Toronto"/>
</dbReference>
<dbReference type="GO" id="GO:0042981">
    <property type="term" value="P:regulation of apoptotic process"/>
    <property type="evidence" value="ECO:0000318"/>
    <property type="project" value="GO_Central"/>
</dbReference>
<dbReference type="GO" id="GO:0042127">
    <property type="term" value="P:regulation of cell population proliferation"/>
    <property type="evidence" value="ECO:0000250"/>
    <property type="project" value="UniProtKB"/>
</dbReference>
<dbReference type="GO" id="GO:1902847">
    <property type="term" value="P:regulation of neuronal signal transduction"/>
    <property type="evidence" value="ECO:0000250"/>
    <property type="project" value="Alzheimers_University_of_Toronto"/>
</dbReference>
<dbReference type="GO" id="GO:0048678">
    <property type="term" value="P:response to axon injury"/>
    <property type="evidence" value="ECO:0000270"/>
    <property type="project" value="RGD"/>
</dbReference>
<dbReference type="GO" id="GO:0009416">
    <property type="term" value="P:response to light stimulus"/>
    <property type="evidence" value="ECO:0000270"/>
    <property type="project" value="RGD"/>
</dbReference>
<dbReference type="GO" id="GO:0051788">
    <property type="term" value="P:response to misfolded protein"/>
    <property type="evidence" value="ECO:0000250"/>
    <property type="project" value="UniProtKB"/>
</dbReference>
<dbReference type="GO" id="GO:0035864">
    <property type="term" value="P:response to potassium ion"/>
    <property type="evidence" value="ECO:0000270"/>
    <property type="project" value="RGD"/>
</dbReference>
<dbReference type="GO" id="GO:0009615">
    <property type="term" value="P:response to virus"/>
    <property type="evidence" value="ECO:0000266"/>
    <property type="project" value="RGD"/>
</dbReference>
<dbReference type="GO" id="GO:0007283">
    <property type="term" value="P:spermatogenesis"/>
    <property type="evidence" value="ECO:0007669"/>
    <property type="project" value="UniProtKB-KW"/>
</dbReference>
<dbReference type="InterPro" id="IPR016016">
    <property type="entry name" value="Clusterin"/>
</dbReference>
<dbReference type="InterPro" id="IPR000753">
    <property type="entry name" value="Clusterin-like"/>
</dbReference>
<dbReference type="InterPro" id="IPR016015">
    <property type="entry name" value="Clusterin_C"/>
</dbReference>
<dbReference type="InterPro" id="IPR033986">
    <property type="entry name" value="Clusterin_CS"/>
</dbReference>
<dbReference type="InterPro" id="IPR016014">
    <property type="entry name" value="Clusterin_N"/>
</dbReference>
<dbReference type="PANTHER" id="PTHR10970">
    <property type="entry name" value="CLUSTERIN"/>
    <property type="match status" value="1"/>
</dbReference>
<dbReference type="PANTHER" id="PTHR10970:SF1">
    <property type="entry name" value="CLUSTERIN"/>
    <property type="match status" value="1"/>
</dbReference>
<dbReference type="Pfam" id="PF01093">
    <property type="entry name" value="Clusterin"/>
    <property type="match status" value="1"/>
</dbReference>
<dbReference type="PIRSF" id="PIRSF002368">
    <property type="entry name" value="Clusterin"/>
    <property type="match status" value="1"/>
</dbReference>
<dbReference type="SMART" id="SM00035">
    <property type="entry name" value="CLa"/>
    <property type="match status" value="1"/>
</dbReference>
<dbReference type="SMART" id="SM00030">
    <property type="entry name" value="CLb"/>
    <property type="match status" value="1"/>
</dbReference>
<dbReference type="PROSITE" id="PS00492">
    <property type="entry name" value="CLUSTERIN_1"/>
    <property type="match status" value="1"/>
</dbReference>
<dbReference type="PROSITE" id="PS00493">
    <property type="entry name" value="CLUSTERIN_2"/>
    <property type="match status" value="1"/>
</dbReference>
<name>CLUS_RAT</name>
<protein>
    <recommendedName>
        <fullName evidence="8">Clusterin</fullName>
    </recommendedName>
    <alternativeName>
        <fullName>Dimeric acid glycoprotein</fullName>
        <shortName>DAG</shortName>
    </alternativeName>
    <alternativeName>
        <fullName evidence="9">Sulfated glycoprotein 2</fullName>
        <shortName evidence="9">SGP-2</shortName>
    </alternativeName>
    <alternativeName>
        <fullName evidence="7">Testosterone repressed prostate message 2</fullName>
        <shortName evidence="10">TRPM-2</shortName>
    </alternativeName>
    <component>
        <recommendedName>
            <fullName>Clusterin beta chain</fullName>
        </recommendedName>
    </component>
    <component>
        <recommendedName>
            <fullName>Clusterin alpha chain</fullName>
        </recommendedName>
    </component>
</protein>